<comment type="function">
    <text evidence="1">The RecF protein is involved in DNA metabolism; it is required for DNA replication and normal SOS inducibility. RecF binds preferentially to single-stranded, linear DNA. It also seems to bind ATP.</text>
</comment>
<comment type="subcellular location">
    <subcellularLocation>
        <location evidence="1">Cytoplasm</location>
    </subcellularLocation>
</comment>
<comment type="similarity">
    <text evidence="1">Belongs to the RecF family.</text>
</comment>
<sequence length="367" mass="42606">MYVKNINLLNYRNYKKLSVELTENVNVFVGDNAQGKTNILESVYYCAFAKSHRTSKDKELINWENSTAYISLLIGKNRLDKKIDINILRDGKKAIKVNNIKVNKIGELFGIFNVVMFSPEDLKVIKEAPSLRRRLLDMELSQVNPNYYFNLVQYNKVLGERNILLKSRSFSEDILDVYDIQLSKYADYIISKRLEYINKINFYGDIIHREITSGKEEINFKYNCTVNLENGKFKDNYLKKLKDNIQKDREKGLTSVGPHRDDFSVFINNIDTKIFGSQGQQRTSILTMKFASLKIIREITGEYPVLLLDDVLSELDLNRKKYILRSIKDIQTIITCAGIEDLNDYLDDKVKIFNVSNGQILNQGRNI</sequence>
<reference key="1">
    <citation type="submission" date="2007-06" db="EMBL/GenBank/DDBJ databases">
        <title>Complete sequence of Clostridium beijerinckii NCIMB 8052.</title>
        <authorList>
            <consortium name="US DOE Joint Genome Institute"/>
            <person name="Copeland A."/>
            <person name="Lucas S."/>
            <person name="Lapidus A."/>
            <person name="Barry K."/>
            <person name="Detter J.C."/>
            <person name="Glavina del Rio T."/>
            <person name="Hammon N."/>
            <person name="Israni S."/>
            <person name="Dalin E."/>
            <person name="Tice H."/>
            <person name="Pitluck S."/>
            <person name="Sims D."/>
            <person name="Brettin T."/>
            <person name="Bruce D."/>
            <person name="Tapia R."/>
            <person name="Brainard J."/>
            <person name="Schmutz J."/>
            <person name="Larimer F."/>
            <person name="Land M."/>
            <person name="Hauser L."/>
            <person name="Kyrpides N."/>
            <person name="Mikhailova N."/>
            <person name="Bennet G."/>
            <person name="Cann I."/>
            <person name="Chen J.-S."/>
            <person name="Contreras A.L."/>
            <person name="Jones D."/>
            <person name="Kashket E."/>
            <person name="Mitchell W."/>
            <person name="Stoddard S."/>
            <person name="Schwarz W."/>
            <person name="Qureshi N."/>
            <person name="Young M."/>
            <person name="Shi Z."/>
            <person name="Ezeji T."/>
            <person name="White B."/>
            <person name="Blaschek H."/>
            <person name="Richardson P."/>
        </authorList>
    </citation>
    <scope>NUCLEOTIDE SEQUENCE [LARGE SCALE GENOMIC DNA]</scope>
    <source>
        <strain>ATCC 51743 / NCIMB 8052</strain>
    </source>
</reference>
<evidence type="ECO:0000255" key="1">
    <source>
        <dbReference type="HAMAP-Rule" id="MF_00365"/>
    </source>
</evidence>
<organism>
    <name type="scientific">Clostridium beijerinckii (strain ATCC 51743 / NCIMB 8052)</name>
    <name type="common">Clostridium acetobutylicum</name>
    <dbReference type="NCBI Taxonomy" id="290402"/>
    <lineage>
        <taxon>Bacteria</taxon>
        <taxon>Bacillati</taxon>
        <taxon>Bacillota</taxon>
        <taxon>Clostridia</taxon>
        <taxon>Eubacteriales</taxon>
        <taxon>Clostridiaceae</taxon>
        <taxon>Clostridium</taxon>
    </lineage>
</organism>
<protein>
    <recommendedName>
        <fullName evidence="1">DNA replication and repair protein RecF</fullName>
    </recommendedName>
</protein>
<proteinExistence type="inferred from homology"/>
<gene>
    <name evidence="1" type="primary">recF</name>
    <name type="ordered locus">Cbei_0004</name>
</gene>
<accession>A6LPB4</accession>
<name>RECF_CLOB8</name>
<dbReference type="EMBL" id="CP000721">
    <property type="protein sequence ID" value="ABR32194.1"/>
    <property type="molecule type" value="Genomic_DNA"/>
</dbReference>
<dbReference type="RefSeq" id="WP_011967369.1">
    <property type="nucleotide sequence ID" value="NC_009617.1"/>
</dbReference>
<dbReference type="SMR" id="A6LPB4"/>
<dbReference type="KEGG" id="cbe:Cbei_0004"/>
<dbReference type="eggNOG" id="COG1195">
    <property type="taxonomic scope" value="Bacteria"/>
</dbReference>
<dbReference type="HOGENOM" id="CLU_040267_0_1_9"/>
<dbReference type="Proteomes" id="UP000000565">
    <property type="component" value="Chromosome"/>
</dbReference>
<dbReference type="GO" id="GO:0005737">
    <property type="term" value="C:cytoplasm"/>
    <property type="evidence" value="ECO:0007669"/>
    <property type="project" value="UniProtKB-SubCell"/>
</dbReference>
<dbReference type="GO" id="GO:0005524">
    <property type="term" value="F:ATP binding"/>
    <property type="evidence" value="ECO:0007669"/>
    <property type="project" value="UniProtKB-UniRule"/>
</dbReference>
<dbReference type="GO" id="GO:0003697">
    <property type="term" value="F:single-stranded DNA binding"/>
    <property type="evidence" value="ECO:0007669"/>
    <property type="project" value="UniProtKB-UniRule"/>
</dbReference>
<dbReference type="GO" id="GO:0006260">
    <property type="term" value="P:DNA replication"/>
    <property type="evidence" value="ECO:0007669"/>
    <property type="project" value="UniProtKB-UniRule"/>
</dbReference>
<dbReference type="GO" id="GO:0000731">
    <property type="term" value="P:DNA synthesis involved in DNA repair"/>
    <property type="evidence" value="ECO:0007669"/>
    <property type="project" value="TreeGrafter"/>
</dbReference>
<dbReference type="GO" id="GO:0006302">
    <property type="term" value="P:double-strand break repair"/>
    <property type="evidence" value="ECO:0007669"/>
    <property type="project" value="TreeGrafter"/>
</dbReference>
<dbReference type="GO" id="GO:0009432">
    <property type="term" value="P:SOS response"/>
    <property type="evidence" value="ECO:0007669"/>
    <property type="project" value="UniProtKB-UniRule"/>
</dbReference>
<dbReference type="CDD" id="cd03242">
    <property type="entry name" value="ABC_RecF"/>
    <property type="match status" value="1"/>
</dbReference>
<dbReference type="Gene3D" id="3.40.50.300">
    <property type="entry name" value="P-loop containing nucleotide triphosphate hydrolases"/>
    <property type="match status" value="1"/>
</dbReference>
<dbReference type="Gene3D" id="1.20.1050.90">
    <property type="entry name" value="RecF/RecN/SMC, N-terminal domain"/>
    <property type="match status" value="1"/>
</dbReference>
<dbReference type="HAMAP" id="MF_00365">
    <property type="entry name" value="RecF"/>
    <property type="match status" value="1"/>
</dbReference>
<dbReference type="InterPro" id="IPR001238">
    <property type="entry name" value="DNA-binding_RecF"/>
</dbReference>
<dbReference type="InterPro" id="IPR018078">
    <property type="entry name" value="DNA-binding_RecF_CS"/>
</dbReference>
<dbReference type="InterPro" id="IPR027417">
    <property type="entry name" value="P-loop_NTPase"/>
</dbReference>
<dbReference type="InterPro" id="IPR003395">
    <property type="entry name" value="RecF/RecN/SMC_N"/>
</dbReference>
<dbReference type="InterPro" id="IPR042174">
    <property type="entry name" value="RecF_2"/>
</dbReference>
<dbReference type="NCBIfam" id="TIGR00611">
    <property type="entry name" value="recf"/>
    <property type="match status" value="1"/>
</dbReference>
<dbReference type="PANTHER" id="PTHR32182">
    <property type="entry name" value="DNA REPLICATION AND REPAIR PROTEIN RECF"/>
    <property type="match status" value="1"/>
</dbReference>
<dbReference type="PANTHER" id="PTHR32182:SF0">
    <property type="entry name" value="DNA REPLICATION AND REPAIR PROTEIN RECF"/>
    <property type="match status" value="1"/>
</dbReference>
<dbReference type="Pfam" id="PF02463">
    <property type="entry name" value="SMC_N"/>
    <property type="match status" value="1"/>
</dbReference>
<dbReference type="SUPFAM" id="SSF52540">
    <property type="entry name" value="P-loop containing nucleoside triphosphate hydrolases"/>
    <property type="match status" value="1"/>
</dbReference>
<dbReference type="PROSITE" id="PS00618">
    <property type="entry name" value="RECF_2"/>
    <property type="match status" value="1"/>
</dbReference>
<keyword id="KW-0067">ATP-binding</keyword>
<keyword id="KW-0963">Cytoplasm</keyword>
<keyword id="KW-0227">DNA damage</keyword>
<keyword id="KW-0234">DNA repair</keyword>
<keyword id="KW-0235">DNA replication</keyword>
<keyword id="KW-0238">DNA-binding</keyword>
<keyword id="KW-0547">Nucleotide-binding</keyword>
<keyword id="KW-0742">SOS response</keyword>
<feature type="chain" id="PRO_1000079583" description="DNA replication and repair protein RecF">
    <location>
        <begin position="1"/>
        <end position="367"/>
    </location>
</feature>
<feature type="binding site" evidence="1">
    <location>
        <begin position="30"/>
        <end position="37"/>
    </location>
    <ligand>
        <name>ATP</name>
        <dbReference type="ChEBI" id="CHEBI:30616"/>
    </ligand>
</feature>